<feature type="chain" id="PRO_1000131850" description="Probable Fe(2+)-trafficking protein">
    <location>
        <begin position="1"/>
        <end position="91"/>
    </location>
</feature>
<name>FETP_KLEP3</name>
<protein>
    <recommendedName>
        <fullName evidence="1">Probable Fe(2+)-trafficking protein</fullName>
    </recommendedName>
</protein>
<organism>
    <name type="scientific">Klebsiella pneumoniae (strain 342)</name>
    <dbReference type="NCBI Taxonomy" id="507522"/>
    <lineage>
        <taxon>Bacteria</taxon>
        <taxon>Pseudomonadati</taxon>
        <taxon>Pseudomonadota</taxon>
        <taxon>Gammaproteobacteria</taxon>
        <taxon>Enterobacterales</taxon>
        <taxon>Enterobacteriaceae</taxon>
        <taxon>Klebsiella/Raoultella group</taxon>
        <taxon>Klebsiella</taxon>
        <taxon>Klebsiella pneumoniae complex</taxon>
    </lineage>
</organism>
<gene>
    <name type="ordered locus">KPK_0715</name>
</gene>
<sequence>MSRTIFCTFLQREADGQDFQLYPGELGKRIYNEISKEAWAQWQHKQTMLINEKKLSMMSPEHRKLLEQEMVQFLFEGKDVHIEGYTPPEKQ</sequence>
<proteinExistence type="inferred from homology"/>
<comment type="function">
    <text evidence="1">Could be a mediator in iron transactions between iron acquisition and iron-requiring processes, such as synthesis and/or repair of Fe-S clusters in biosynthetic enzymes.</text>
</comment>
<comment type="subunit">
    <text evidence="1">Monomer.</text>
</comment>
<comment type="similarity">
    <text evidence="1">Belongs to the Fe(2+)-trafficking protein family.</text>
</comment>
<accession>B5XU89</accession>
<reference key="1">
    <citation type="journal article" date="2008" name="PLoS Genet.">
        <title>Complete genome sequence of the N2-fixing broad host range endophyte Klebsiella pneumoniae 342 and virulence predictions verified in mice.</title>
        <authorList>
            <person name="Fouts D.E."/>
            <person name="Tyler H.L."/>
            <person name="DeBoy R.T."/>
            <person name="Daugherty S."/>
            <person name="Ren Q."/>
            <person name="Badger J.H."/>
            <person name="Durkin A.S."/>
            <person name="Huot H."/>
            <person name="Shrivastava S."/>
            <person name="Kothari S."/>
            <person name="Dodson R.J."/>
            <person name="Mohamoud Y."/>
            <person name="Khouri H."/>
            <person name="Roesch L.F.W."/>
            <person name="Krogfelt K.A."/>
            <person name="Struve C."/>
            <person name="Triplett E.W."/>
            <person name="Methe B.A."/>
        </authorList>
    </citation>
    <scope>NUCLEOTIDE SEQUENCE [LARGE SCALE GENOMIC DNA]</scope>
    <source>
        <strain>342</strain>
    </source>
</reference>
<dbReference type="EMBL" id="CP000964">
    <property type="protein sequence ID" value="ACI07342.1"/>
    <property type="molecule type" value="Genomic_DNA"/>
</dbReference>
<dbReference type="SMR" id="B5XU89"/>
<dbReference type="KEGG" id="kpe:KPK_0715"/>
<dbReference type="HOGENOM" id="CLU_170994_0_0_6"/>
<dbReference type="BioCyc" id="KPNE507522:GI0B-715-MONOMER"/>
<dbReference type="Proteomes" id="UP000001734">
    <property type="component" value="Chromosome"/>
</dbReference>
<dbReference type="GO" id="GO:0005829">
    <property type="term" value="C:cytosol"/>
    <property type="evidence" value="ECO:0007669"/>
    <property type="project" value="TreeGrafter"/>
</dbReference>
<dbReference type="GO" id="GO:0005506">
    <property type="term" value="F:iron ion binding"/>
    <property type="evidence" value="ECO:0007669"/>
    <property type="project" value="UniProtKB-UniRule"/>
</dbReference>
<dbReference type="GO" id="GO:0034599">
    <property type="term" value="P:cellular response to oxidative stress"/>
    <property type="evidence" value="ECO:0007669"/>
    <property type="project" value="TreeGrafter"/>
</dbReference>
<dbReference type="FunFam" id="1.10.3880.10:FF:000001">
    <property type="entry name" value="Probable Fe(2+)-trafficking protein"/>
    <property type="match status" value="1"/>
</dbReference>
<dbReference type="Gene3D" id="1.10.3880.10">
    <property type="entry name" value="Fe(II) trafficking protein YggX"/>
    <property type="match status" value="1"/>
</dbReference>
<dbReference type="HAMAP" id="MF_00686">
    <property type="entry name" value="Fe_traffic_YggX"/>
    <property type="match status" value="1"/>
</dbReference>
<dbReference type="InterPro" id="IPR007457">
    <property type="entry name" value="Fe_traffick_prot_YggX"/>
</dbReference>
<dbReference type="InterPro" id="IPR036766">
    <property type="entry name" value="Fe_traffick_prot_YggX_sf"/>
</dbReference>
<dbReference type="NCBIfam" id="NF003817">
    <property type="entry name" value="PRK05408.1"/>
    <property type="match status" value="1"/>
</dbReference>
<dbReference type="PANTHER" id="PTHR36965">
    <property type="entry name" value="FE(2+)-TRAFFICKING PROTEIN-RELATED"/>
    <property type="match status" value="1"/>
</dbReference>
<dbReference type="PANTHER" id="PTHR36965:SF1">
    <property type="entry name" value="FE(2+)-TRAFFICKING PROTEIN-RELATED"/>
    <property type="match status" value="1"/>
</dbReference>
<dbReference type="Pfam" id="PF04362">
    <property type="entry name" value="Iron_traffic"/>
    <property type="match status" value="1"/>
</dbReference>
<dbReference type="PIRSF" id="PIRSF029827">
    <property type="entry name" value="Fe_traffic_YggX"/>
    <property type="match status" value="1"/>
</dbReference>
<dbReference type="SUPFAM" id="SSF111148">
    <property type="entry name" value="YggX-like"/>
    <property type="match status" value="1"/>
</dbReference>
<evidence type="ECO:0000255" key="1">
    <source>
        <dbReference type="HAMAP-Rule" id="MF_00686"/>
    </source>
</evidence>
<keyword id="KW-0408">Iron</keyword>